<proteinExistence type="inferred from homology"/>
<feature type="chain" id="PRO_0000337439" description="Elongation factor Tu 2">
    <location>
        <begin position="1"/>
        <end position="396"/>
    </location>
</feature>
<feature type="domain" description="tr-type G">
    <location>
        <begin position="10"/>
        <end position="206"/>
    </location>
</feature>
<feature type="region of interest" description="G1" evidence="1">
    <location>
        <begin position="19"/>
        <end position="26"/>
    </location>
</feature>
<feature type="region of interest" description="G2" evidence="1">
    <location>
        <begin position="60"/>
        <end position="64"/>
    </location>
</feature>
<feature type="region of interest" description="G3" evidence="1">
    <location>
        <begin position="81"/>
        <end position="84"/>
    </location>
</feature>
<feature type="region of interest" description="G4" evidence="1">
    <location>
        <begin position="136"/>
        <end position="139"/>
    </location>
</feature>
<feature type="region of interest" description="G5" evidence="1">
    <location>
        <begin position="174"/>
        <end position="176"/>
    </location>
</feature>
<feature type="binding site" evidence="2">
    <location>
        <begin position="19"/>
        <end position="26"/>
    </location>
    <ligand>
        <name>GTP</name>
        <dbReference type="ChEBI" id="CHEBI:37565"/>
    </ligand>
</feature>
<feature type="binding site" evidence="2">
    <location>
        <position position="26"/>
    </location>
    <ligand>
        <name>Mg(2+)</name>
        <dbReference type="ChEBI" id="CHEBI:18420"/>
    </ligand>
</feature>
<feature type="binding site" evidence="2">
    <location>
        <begin position="81"/>
        <end position="85"/>
    </location>
    <ligand>
        <name>GTP</name>
        <dbReference type="ChEBI" id="CHEBI:37565"/>
    </ligand>
</feature>
<feature type="binding site" evidence="2">
    <location>
        <begin position="136"/>
        <end position="139"/>
    </location>
    <ligand>
        <name>GTP</name>
        <dbReference type="ChEBI" id="CHEBI:37565"/>
    </ligand>
</feature>
<protein>
    <recommendedName>
        <fullName evidence="2">Elongation factor Tu 2</fullName>
        <shortName evidence="2">EF-Tu 2</shortName>
        <ecNumber evidence="2">3.6.5.3</ecNumber>
    </recommendedName>
</protein>
<accession>Q1D776</accession>
<keyword id="KW-0963">Cytoplasm</keyword>
<keyword id="KW-0251">Elongation factor</keyword>
<keyword id="KW-0342">GTP-binding</keyword>
<keyword id="KW-0378">Hydrolase</keyword>
<keyword id="KW-0460">Magnesium</keyword>
<keyword id="KW-0479">Metal-binding</keyword>
<keyword id="KW-0547">Nucleotide-binding</keyword>
<keyword id="KW-0648">Protein biosynthesis</keyword>
<keyword id="KW-1185">Reference proteome</keyword>
<name>EFTU2_MYXXD</name>
<dbReference type="EC" id="3.6.5.3" evidence="2"/>
<dbReference type="EMBL" id="CP000113">
    <property type="protein sequence ID" value="ABF87514.1"/>
    <property type="molecule type" value="Genomic_DNA"/>
</dbReference>
<dbReference type="RefSeq" id="WP_011553342.1">
    <property type="nucleotide sequence ID" value="NC_008095.1"/>
</dbReference>
<dbReference type="SMR" id="Q1D776"/>
<dbReference type="STRING" id="246197.MXAN_3298"/>
<dbReference type="EnsemblBacteria" id="ABF87514">
    <property type="protein sequence ID" value="ABF87514"/>
    <property type="gene ID" value="MXAN_3298"/>
</dbReference>
<dbReference type="GeneID" id="41360651"/>
<dbReference type="KEGG" id="mxa:MXAN_3298"/>
<dbReference type="eggNOG" id="COG0050">
    <property type="taxonomic scope" value="Bacteria"/>
</dbReference>
<dbReference type="HOGENOM" id="CLU_007265_0_0_7"/>
<dbReference type="OrthoDB" id="9803139at2"/>
<dbReference type="Proteomes" id="UP000002402">
    <property type="component" value="Chromosome"/>
</dbReference>
<dbReference type="GO" id="GO:0005829">
    <property type="term" value="C:cytosol"/>
    <property type="evidence" value="ECO:0007669"/>
    <property type="project" value="TreeGrafter"/>
</dbReference>
<dbReference type="GO" id="GO:0005525">
    <property type="term" value="F:GTP binding"/>
    <property type="evidence" value="ECO:0007669"/>
    <property type="project" value="UniProtKB-UniRule"/>
</dbReference>
<dbReference type="GO" id="GO:0003924">
    <property type="term" value="F:GTPase activity"/>
    <property type="evidence" value="ECO:0007669"/>
    <property type="project" value="InterPro"/>
</dbReference>
<dbReference type="GO" id="GO:0003746">
    <property type="term" value="F:translation elongation factor activity"/>
    <property type="evidence" value="ECO:0007669"/>
    <property type="project" value="UniProtKB-UniRule"/>
</dbReference>
<dbReference type="CDD" id="cd01884">
    <property type="entry name" value="EF_Tu"/>
    <property type="match status" value="1"/>
</dbReference>
<dbReference type="CDD" id="cd03697">
    <property type="entry name" value="EFTU_II"/>
    <property type="match status" value="1"/>
</dbReference>
<dbReference type="CDD" id="cd03707">
    <property type="entry name" value="EFTU_III"/>
    <property type="match status" value="1"/>
</dbReference>
<dbReference type="FunFam" id="2.40.30.10:FF:000001">
    <property type="entry name" value="Elongation factor Tu"/>
    <property type="match status" value="1"/>
</dbReference>
<dbReference type="FunFam" id="3.40.50.300:FF:000003">
    <property type="entry name" value="Elongation factor Tu"/>
    <property type="match status" value="1"/>
</dbReference>
<dbReference type="Gene3D" id="3.40.50.300">
    <property type="entry name" value="P-loop containing nucleotide triphosphate hydrolases"/>
    <property type="match status" value="1"/>
</dbReference>
<dbReference type="Gene3D" id="2.40.30.10">
    <property type="entry name" value="Translation factors"/>
    <property type="match status" value="2"/>
</dbReference>
<dbReference type="HAMAP" id="MF_00118_B">
    <property type="entry name" value="EF_Tu_B"/>
    <property type="match status" value="1"/>
</dbReference>
<dbReference type="InterPro" id="IPR041709">
    <property type="entry name" value="EF-Tu_GTP-bd"/>
</dbReference>
<dbReference type="InterPro" id="IPR050055">
    <property type="entry name" value="EF-Tu_GTPase"/>
</dbReference>
<dbReference type="InterPro" id="IPR004161">
    <property type="entry name" value="EFTu-like_2"/>
</dbReference>
<dbReference type="InterPro" id="IPR033720">
    <property type="entry name" value="EFTU_2"/>
</dbReference>
<dbReference type="InterPro" id="IPR031157">
    <property type="entry name" value="G_TR_CS"/>
</dbReference>
<dbReference type="InterPro" id="IPR027417">
    <property type="entry name" value="P-loop_NTPase"/>
</dbReference>
<dbReference type="InterPro" id="IPR005225">
    <property type="entry name" value="Small_GTP-bd"/>
</dbReference>
<dbReference type="InterPro" id="IPR000795">
    <property type="entry name" value="T_Tr_GTP-bd_dom"/>
</dbReference>
<dbReference type="InterPro" id="IPR009000">
    <property type="entry name" value="Transl_B-barrel_sf"/>
</dbReference>
<dbReference type="InterPro" id="IPR009001">
    <property type="entry name" value="Transl_elong_EF1A/Init_IF2_C"/>
</dbReference>
<dbReference type="InterPro" id="IPR004541">
    <property type="entry name" value="Transl_elong_EFTu/EF1A_bac/org"/>
</dbReference>
<dbReference type="InterPro" id="IPR004160">
    <property type="entry name" value="Transl_elong_EFTu/EF1A_C"/>
</dbReference>
<dbReference type="NCBIfam" id="TIGR00485">
    <property type="entry name" value="EF-Tu"/>
    <property type="match status" value="1"/>
</dbReference>
<dbReference type="NCBIfam" id="NF000766">
    <property type="entry name" value="PRK00049.1"/>
    <property type="match status" value="1"/>
</dbReference>
<dbReference type="NCBIfam" id="NF009372">
    <property type="entry name" value="PRK12735.1"/>
    <property type="match status" value="1"/>
</dbReference>
<dbReference type="NCBIfam" id="NF009373">
    <property type="entry name" value="PRK12736.1"/>
    <property type="match status" value="1"/>
</dbReference>
<dbReference type="NCBIfam" id="TIGR00231">
    <property type="entry name" value="small_GTP"/>
    <property type="match status" value="1"/>
</dbReference>
<dbReference type="PANTHER" id="PTHR43721:SF22">
    <property type="entry name" value="ELONGATION FACTOR TU, MITOCHONDRIAL"/>
    <property type="match status" value="1"/>
</dbReference>
<dbReference type="PANTHER" id="PTHR43721">
    <property type="entry name" value="ELONGATION FACTOR TU-RELATED"/>
    <property type="match status" value="1"/>
</dbReference>
<dbReference type="Pfam" id="PF00009">
    <property type="entry name" value="GTP_EFTU"/>
    <property type="match status" value="1"/>
</dbReference>
<dbReference type="Pfam" id="PF03144">
    <property type="entry name" value="GTP_EFTU_D2"/>
    <property type="match status" value="1"/>
</dbReference>
<dbReference type="Pfam" id="PF03143">
    <property type="entry name" value="GTP_EFTU_D3"/>
    <property type="match status" value="1"/>
</dbReference>
<dbReference type="PRINTS" id="PR00315">
    <property type="entry name" value="ELONGATNFCT"/>
</dbReference>
<dbReference type="SUPFAM" id="SSF50465">
    <property type="entry name" value="EF-Tu/eEF-1alpha/eIF2-gamma C-terminal domain"/>
    <property type="match status" value="1"/>
</dbReference>
<dbReference type="SUPFAM" id="SSF52540">
    <property type="entry name" value="P-loop containing nucleoside triphosphate hydrolases"/>
    <property type="match status" value="1"/>
</dbReference>
<dbReference type="SUPFAM" id="SSF50447">
    <property type="entry name" value="Translation proteins"/>
    <property type="match status" value="1"/>
</dbReference>
<dbReference type="PROSITE" id="PS00301">
    <property type="entry name" value="G_TR_1"/>
    <property type="match status" value="1"/>
</dbReference>
<dbReference type="PROSITE" id="PS51722">
    <property type="entry name" value="G_TR_2"/>
    <property type="match status" value="1"/>
</dbReference>
<gene>
    <name evidence="2" type="primary">tuf2</name>
    <name type="ordered locus">MXAN_3298</name>
</gene>
<sequence>MAKEKFERNKPHVNIGTIGHVDHGKTSLTAAITKVLAKTGGATFLAYDLIDKAPEERERGITISTSHVEYQTSNRHYAHVDCPGHADYVKNMITGAAQMDGAILVVSAADGPMPQTREHILLARQVGVPYIVVFLNKVDMLDDPELRELVEMEVRDLLKKYEFPGDDIPIIPGSALKALEGDTSDIGEPAILKLMEAVDSYIPTPQRATDKPFLMPVEDVFSISGRGTVATGRVERGIIKVGEEVEVVGLRPTQKTVVTGVEMFRKLLDQGMAGDNIGALVRGLKREDMERGQVLAKPGSITPHTKFKAQIYVLSKEEGGRHTPFFKGYRPQFYFRTTDVTGSVKLPENVEMVMPGDNIAIEVELITPVAMEKELRFAVREGGRTVGAGVVAEIVE</sequence>
<reference key="1">
    <citation type="journal article" date="2006" name="Proc. Natl. Acad. Sci. U.S.A.">
        <title>Evolution of sensory complexity recorded in a myxobacterial genome.</title>
        <authorList>
            <person name="Goldman B.S."/>
            <person name="Nierman W.C."/>
            <person name="Kaiser D."/>
            <person name="Slater S.C."/>
            <person name="Durkin A.S."/>
            <person name="Eisen J.A."/>
            <person name="Ronning C.M."/>
            <person name="Barbazuk W.B."/>
            <person name="Blanchard M."/>
            <person name="Field C."/>
            <person name="Halling C."/>
            <person name="Hinkle G."/>
            <person name="Iartchuk O."/>
            <person name="Kim H.S."/>
            <person name="Mackenzie C."/>
            <person name="Madupu R."/>
            <person name="Miller N."/>
            <person name="Shvartsbeyn A."/>
            <person name="Sullivan S.A."/>
            <person name="Vaudin M."/>
            <person name="Wiegand R."/>
            <person name="Kaplan H.B."/>
        </authorList>
    </citation>
    <scope>NUCLEOTIDE SEQUENCE [LARGE SCALE GENOMIC DNA]</scope>
    <source>
        <strain>DK1622</strain>
    </source>
</reference>
<evidence type="ECO:0000250" key="1"/>
<evidence type="ECO:0000255" key="2">
    <source>
        <dbReference type="HAMAP-Rule" id="MF_00118"/>
    </source>
</evidence>
<comment type="function">
    <text evidence="2">GTP hydrolase that promotes the GTP-dependent binding of aminoacyl-tRNA to the A-site of ribosomes during protein biosynthesis.</text>
</comment>
<comment type="catalytic activity">
    <reaction evidence="2">
        <text>GTP + H2O = GDP + phosphate + H(+)</text>
        <dbReference type="Rhea" id="RHEA:19669"/>
        <dbReference type="ChEBI" id="CHEBI:15377"/>
        <dbReference type="ChEBI" id="CHEBI:15378"/>
        <dbReference type="ChEBI" id="CHEBI:37565"/>
        <dbReference type="ChEBI" id="CHEBI:43474"/>
        <dbReference type="ChEBI" id="CHEBI:58189"/>
        <dbReference type="EC" id="3.6.5.3"/>
    </reaction>
    <physiologicalReaction direction="left-to-right" evidence="2">
        <dbReference type="Rhea" id="RHEA:19670"/>
    </physiologicalReaction>
</comment>
<comment type="subunit">
    <text evidence="2">Monomer.</text>
</comment>
<comment type="subcellular location">
    <subcellularLocation>
        <location evidence="2">Cytoplasm</location>
    </subcellularLocation>
</comment>
<comment type="similarity">
    <text evidence="2">Belongs to the TRAFAC class translation factor GTPase superfamily. Classic translation factor GTPase family. EF-Tu/EF-1A subfamily.</text>
</comment>
<organism>
    <name type="scientific">Myxococcus xanthus (strain DK1622)</name>
    <dbReference type="NCBI Taxonomy" id="246197"/>
    <lineage>
        <taxon>Bacteria</taxon>
        <taxon>Pseudomonadati</taxon>
        <taxon>Myxococcota</taxon>
        <taxon>Myxococcia</taxon>
        <taxon>Myxococcales</taxon>
        <taxon>Cystobacterineae</taxon>
        <taxon>Myxococcaceae</taxon>
        <taxon>Myxococcus</taxon>
    </lineage>
</organism>